<keyword id="KW-0963">Cytoplasm</keyword>
<keyword id="KW-0570">Pentose shunt</keyword>
<keyword id="KW-0704">Schiff base</keyword>
<keyword id="KW-0808">Transferase</keyword>
<evidence type="ECO:0000255" key="1">
    <source>
        <dbReference type="HAMAP-Rule" id="MF_00493"/>
    </source>
</evidence>
<feature type="chain" id="PRO_1000198458" description="Transaldolase">
    <location>
        <begin position="1"/>
        <end position="373"/>
    </location>
</feature>
<feature type="active site" description="Schiff-base intermediate with substrate" evidence="1">
    <location>
        <position position="143"/>
    </location>
</feature>
<gene>
    <name evidence="1" type="primary">tal</name>
    <name type="ordered locus">JTY_1484</name>
</gene>
<comment type="function">
    <text evidence="1">Transaldolase is important for the balance of metabolites in the pentose-phosphate pathway.</text>
</comment>
<comment type="catalytic activity">
    <reaction evidence="1">
        <text>D-sedoheptulose 7-phosphate + D-glyceraldehyde 3-phosphate = D-erythrose 4-phosphate + beta-D-fructose 6-phosphate</text>
        <dbReference type="Rhea" id="RHEA:17053"/>
        <dbReference type="ChEBI" id="CHEBI:16897"/>
        <dbReference type="ChEBI" id="CHEBI:57483"/>
        <dbReference type="ChEBI" id="CHEBI:57634"/>
        <dbReference type="ChEBI" id="CHEBI:59776"/>
        <dbReference type="EC" id="2.2.1.2"/>
    </reaction>
</comment>
<comment type="pathway">
    <text evidence="1">Carbohydrate degradation; pentose phosphate pathway; D-glyceraldehyde 3-phosphate and beta-D-fructose 6-phosphate from D-ribose 5-phosphate and D-xylulose 5-phosphate (non-oxidative stage): step 2/3.</text>
</comment>
<comment type="subcellular location">
    <subcellularLocation>
        <location evidence="1">Cytoplasm</location>
    </subcellularLocation>
</comment>
<comment type="similarity">
    <text evidence="1">Belongs to the transaldolase family. Type 2 subfamily.</text>
</comment>
<proteinExistence type="inferred from homology"/>
<organism>
    <name type="scientific">Mycobacterium bovis (strain BCG / Tokyo 172 / ATCC 35737 / TMC 1019)</name>
    <dbReference type="NCBI Taxonomy" id="561275"/>
    <lineage>
        <taxon>Bacteria</taxon>
        <taxon>Bacillati</taxon>
        <taxon>Actinomycetota</taxon>
        <taxon>Actinomycetes</taxon>
        <taxon>Mycobacteriales</taxon>
        <taxon>Mycobacteriaceae</taxon>
        <taxon>Mycobacterium</taxon>
        <taxon>Mycobacterium tuberculosis complex</taxon>
    </lineage>
</organism>
<reference key="1">
    <citation type="journal article" date="2009" name="Vaccine">
        <title>Whole genome sequence analysis of Mycobacterium bovis bacillus Calmette-Guerin (BCG) Tokyo 172: a comparative study of BCG vaccine substrains.</title>
        <authorList>
            <person name="Seki M."/>
            <person name="Honda I."/>
            <person name="Fujita I."/>
            <person name="Yano I."/>
            <person name="Yamamoto S."/>
            <person name="Koyama A."/>
        </authorList>
    </citation>
    <scope>NUCLEOTIDE SEQUENCE [LARGE SCALE GENOMIC DNA]</scope>
    <source>
        <strain>BCG / Tokyo 172 / ATCC 35737 / TMC 1019</strain>
    </source>
</reference>
<sequence>MTAQNPNLAALSAAGVSVWLDDLSRDRLRSGNLQELIDTKSVVGVTTNPSIFQKALSEGHTYDAQIAELAARGADVDATIRTVTTDDVRSACDVLVPQWEDSDGVDGRVSIEVDPRLAHETEKTIQQAIELWKIVDRPNLFIKIPATKAGLPAISAVLAEGISVNVTLIFSVQRYREVMDAYLTGMEKARQAGHSLSKIHSVASFFVSRVDTEIDKRLDRIGSRQALELRGQAGVANARLAYAAYREVFEDSDRYRSLKVDGARVQRPLWASTGVKNPDYSDTLYVTELVAPHTVNTMPEKTIDAVADHGVIQGDTVTGTASDAQAVFDQLGAIGIDLTDVFAVLEEEGVRKFEASWNELLQETRAHLDTAAQ</sequence>
<accession>C1AN93</accession>
<name>TAL_MYCBT</name>
<dbReference type="EC" id="2.2.1.2" evidence="1"/>
<dbReference type="EMBL" id="AP010918">
    <property type="protein sequence ID" value="BAH25772.1"/>
    <property type="molecule type" value="Genomic_DNA"/>
</dbReference>
<dbReference type="RefSeq" id="WP_003407447.1">
    <property type="nucleotide sequence ID" value="NZ_CP014566.1"/>
</dbReference>
<dbReference type="SMR" id="C1AN93"/>
<dbReference type="KEGG" id="mbt:JTY_1484"/>
<dbReference type="HOGENOM" id="CLU_050771_1_0_11"/>
<dbReference type="UniPathway" id="UPA00115">
    <property type="reaction ID" value="UER00414"/>
</dbReference>
<dbReference type="GO" id="GO:0005737">
    <property type="term" value="C:cytoplasm"/>
    <property type="evidence" value="ECO:0007669"/>
    <property type="project" value="UniProtKB-SubCell"/>
</dbReference>
<dbReference type="GO" id="GO:0004801">
    <property type="term" value="F:transaldolase activity"/>
    <property type="evidence" value="ECO:0007669"/>
    <property type="project" value="UniProtKB-UniRule"/>
</dbReference>
<dbReference type="GO" id="GO:0005975">
    <property type="term" value="P:carbohydrate metabolic process"/>
    <property type="evidence" value="ECO:0007669"/>
    <property type="project" value="InterPro"/>
</dbReference>
<dbReference type="GO" id="GO:0006098">
    <property type="term" value="P:pentose-phosphate shunt"/>
    <property type="evidence" value="ECO:0007669"/>
    <property type="project" value="UniProtKB-UniRule"/>
</dbReference>
<dbReference type="CDD" id="cd00955">
    <property type="entry name" value="Transaldolase_like"/>
    <property type="match status" value="1"/>
</dbReference>
<dbReference type="FunFam" id="3.20.20.70:FF:000174">
    <property type="entry name" value="Transaldolase type"/>
    <property type="match status" value="1"/>
</dbReference>
<dbReference type="Gene3D" id="3.20.20.70">
    <property type="entry name" value="Aldolase class I"/>
    <property type="match status" value="1"/>
</dbReference>
<dbReference type="HAMAP" id="MF_00493">
    <property type="entry name" value="Transaldolase_2"/>
    <property type="match status" value="1"/>
</dbReference>
<dbReference type="InterPro" id="IPR013785">
    <property type="entry name" value="Aldolase_TIM"/>
</dbReference>
<dbReference type="InterPro" id="IPR001585">
    <property type="entry name" value="TAL/FSA"/>
</dbReference>
<dbReference type="InterPro" id="IPR004732">
    <property type="entry name" value="Transaldolase_2"/>
</dbReference>
<dbReference type="InterPro" id="IPR018225">
    <property type="entry name" value="Transaldolase_AS"/>
</dbReference>
<dbReference type="NCBIfam" id="NF002881">
    <property type="entry name" value="PRK03343.1"/>
    <property type="match status" value="1"/>
</dbReference>
<dbReference type="NCBIfam" id="TIGR00876">
    <property type="entry name" value="tal_mycobact"/>
    <property type="match status" value="1"/>
</dbReference>
<dbReference type="PANTHER" id="PTHR10683">
    <property type="entry name" value="TRANSALDOLASE"/>
    <property type="match status" value="1"/>
</dbReference>
<dbReference type="PANTHER" id="PTHR10683:SF31">
    <property type="entry name" value="TRANSALDOLASE"/>
    <property type="match status" value="1"/>
</dbReference>
<dbReference type="Pfam" id="PF00923">
    <property type="entry name" value="TAL_FSA"/>
    <property type="match status" value="1"/>
</dbReference>
<dbReference type="PIRSF" id="PIRSF036915">
    <property type="entry name" value="Trnald_Bac_Plnt"/>
    <property type="match status" value="1"/>
</dbReference>
<dbReference type="SUPFAM" id="SSF51569">
    <property type="entry name" value="Aldolase"/>
    <property type="match status" value="1"/>
</dbReference>
<dbReference type="PROSITE" id="PS01054">
    <property type="entry name" value="TRANSALDOLASE_1"/>
    <property type="match status" value="1"/>
</dbReference>
<dbReference type="PROSITE" id="PS00958">
    <property type="entry name" value="TRANSALDOLASE_2"/>
    <property type="match status" value="1"/>
</dbReference>
<protein>
    <recommendedName>
        <fullName evidence="1">Transaldolase</fullName>
        <ecNumber evidence="1">2.2.1.2</ecNumber>
    </recommendedName>
</protein>